<feature type="chain" id="PRO_0000392920" description="Protein reprimo A">
    <location>
        <begin position="1"/>
        <end position="103"/>
    </location>
</feature>
<feature type="transmembrane region" description="Helical" evidence="2">
    <location>
        <begin position="50"/>
        <end position="70"/>
    </location>
</feature>
<evidence type="ECO:0000250" key="1">
    <source>
        <dbReference type="UniProtKB" id="Q9JJ72"/>
    </source>
</evidence>
<evidence type="ECO:0000255" key="2"/>
<evidence type="ECO:0000312" key="3">
    <source>
        <dbReference type="EMBL" id="AAH95688.1"/>
    </source>
</evidence>
<evidence type="ECO:0000312" key="4">
    <source>
        <dbReference type="ZFIN" id="ZDB-GENE-050522-218"/>
    </source>
</evidence>
<keyword id="KW-0963">Cytoplasm</keyword>
<keyword id="KW-0472">Membrane</keyword>
<keyword id="KW-1185">Reference proteome</keyword>
<keyword id="KW-0812">Transmembrane</keyword>
<keyword id="KW-1133">Transmembrane helix</keyword>
<proteinExistence type="inferred from homology"/>
<comment type="function">
    <text evidence="1">May be involved in the regulation of p53-dependent G2 arrest of the cell cycle.</text>
</comment>
<comment type="subcellular location">
    <subcellularLocation>
        <location evidence="1 2">Cytoplasm</location>
    </subcellularLocation>
    <subcellularLocation>
        <location evidence="2">Membrane</location>
        <topology evidence="2">Single-pass membrane protein</topology>
    </subcellularLocation>
</comment>
<comment type="similarity">
    <text evidence="2">Belongs to the reprimo family.</text>
</comment>
<sequence>MNSTFNQTDSGIFSNRTEENLLCCNFSSVVTDNGFAAAAPDERSLFIMRIVQIAVMCVLSLTVVFGIFFLGCNLLIKSEGMINFLVTDRRPSKEVEAVIVGAY</sequence>
<name>RPRMA_DANRE</name>
<accession>Q502I1</accession>
<protein>
    <recommendedName>
        <fullName evidence="4">Protein reprimo A</fullName>
    </recommendedName>
</protein>
<gene>
    <name evidence="4" type="primary">rprma</name>
    <name type="ORF">zgc:112209</name>
</gene>
<dbReference type="EMBL" id="BC095688">
    <property type="protein sequence ID" value="AAH95688.1"/>
    <property type="molecule type" value="mRNA"/>
</dbReference>
<dbReference type="RefSeq" id="NP_001018500.1">
    <property type="nucleotide sequence ID" value="NM_001020664.1"/>
</dbReference>
<dbReference type="FunCoup" id="Q502I1">
    <property type="interactions" value="1683"/>
</dbReference>
<dbReference type="STRING" id="7955.ENSDARP00000069903"/>
<dbReference type="PaxDb" id="7955-ENSDARP00000069903"/>
<dbReference type="Ensembl" id="ENSDART00000075420">
    <property type="protein sequence ID" value="ENSDARP00000069903"/>
    <property type="gene ID" value="ENSDARG00000053383"/>
</dbReference>
<dbReference type="GeneID" id="553689"/>
<dbReference type="KEGG" id="dre:553689"/>
<dbReference type="AGR" id="ZFIN:ZDB-GENE-050522-218"/>
<dbReference type="CTD" id="553689"/>
<dbReference type="ZFIN" id="ZDB-GENE-050522-218">
    <property type="gene designation" value="rprma"/>
</dbReference>
<dbReference type="eggNOG" id="ENOG502S262">
    <property type="taxonomic scope" value="Eukaryota"/>
</dbReference>
<dbReference type="HOGENOM" id="CLU_170456_0_0_1"/>
<dbReference type="InParanoid" id="Q502I1"/>
<dbReference type="OMA" id="TEEFLCC"/>
<dbReference type="OrthoDB" id="8570856at2759"/>
<dbReference type="PhylomeDB" id="Q502I1"/>
<dbReference type="TreeFam" id="TF332720"/>
<dbReference type="PRO" id="PR:Q502I1"/>
<dbReference type="Proteomes" id="UP000000437">
    <property type="component" value="Chromosome 9"/>
</dbReference>
<dbReference type="Bgee" id="ENSDARG00000053383">
    <property type="expression patterns" value="Expressed in vasculature of brain and 35 other cell types or tissues"/>
</dbReference>
<dbReference type="GO" id="GO:0005737">
    <property type="term" value="C:cytoplasm"/>
    <property type="evidence" value="ECO:0007669"/>
    <property type="project" value="UniProtKB-SubCell"/>
</dbReference>
<dbReference type="GO" id="GO:0016020">
    <property type="term" value="C:membrane"/>
    <property type="evidence" value="ECO:0007669"/>
    <property type="project" value="UniProtKB-SubCell"/>
</dbReference>
<dbReference type="InterPro" id="IPR043383">
    <property type="entry name" value="Reprimo_fam"/>
</dbReference>
<dbReference type="PANTHER" id="PTHR28649:SF2">
    <property type="entry name" value="PROTEIN REPRIMO"/>
    <property type="match status" value="1"/>
</dbReference>
<dbReference type="PANTHER" id="PTHR28649">
    <property type="entry name" value="PROTEIN REPRIMO-RELATED"/>
    <property type="match status" value="1"/>
</dbReference>
<reference evidence="3" key="1">
    <citation type="submission" date="2005-05" db="EMBL/GenBank/DDBJ databases">
        <authorList>
            <consortium name="NIH - Zebrafish Gene Collection (ZGC) project"/>
        </authorList>
    </citation>
    <scope>NUCLEOTIDE SEQUENCE [LARGE SCALE MRNA]</scope>
    <source>
        <tissue evidence="3">Larva</tissue>
    </source>
</reference>
<organism>
    <name type="scientific">Danio rerio</name>
    <name type="common">Zebrafish</name>
    <name type="synonym">Brachydanio rerio</name>
    <dbReference type="NCBI Taxonomy" id="7955"/>
    <lineage>
        <taxon>Eukaryota</taxon>
        <taxon>Metazoa</taxon>
        <taxon>Chordata</taxon>
        <taxon>Craniata</taxon>
        <taxon>Vertebrata</taxon>
        <taxon>Euteleostomi</taxon>
        <taxon>Actinopterygii</taxon>
        <taxon>Neopterygii</taxon>
        <taxon>Teleostei</taxon>
        <taxon>Ostariophysi</taxon>
        <taxon>Cypriniformes</taxon>
        <taxon>Danionidae</taxon>
        <taxon>Danioninae</taxon>
        <taxon>Danio</taxon>
    </lineage>
</organism>